<name>RISB_ANOFW</name>
<gene>
    <name evidence="1" type="primary">ribH</name>
    <name type="ordered locus">Aflv_1018</name>
</gene>
<protein>
    <recommendedName>
        <fullName evidence="1">6,7-dimethyl-8-ribityllumazine synthase</fullName>
        <shortName evidence="1">DMRL synthase</shortName>
        <shortName evidence="1">LS</shortName>
        <shortName evidence="1">Lumazine synthase</shortName>
        <ecNumber evidence="1">2.5.1.78</ecNumber>
    </recommendedName>
</protein>
<keyword id="KW-0686">Riboflavin biosynthesis</keyword>
<keyword id="KW-0808">Transferase</keyword>
<proteinExistence type="inferred from homology"/>
<evidence type="ECO:0000255" key="1">
    <source>
        <dbReference type="HAMAP-Rule" id="MF_00178"/>
    </source>
</evidence>
<comment type="function">
    <text evidence="1">Catalyzes the formation of 6,7-dimethyl-8-ribityllumazine by condensation of 5-amino-6-(D-ribitylamino)uracil with 3,4-dihydroxy-2-butanone 4-phosphate. This is the penultimate step in the biosynthesis of riboflavin.</text>
</comment>
<comment type="catalytic activity">
    <reaction evidence="1">
        <text>(2S)-2-hydroxy-3-oxobutyl phosphate + 5-amino-6-(D-ribitylamino)uracil = 6,7-dimethyl-8-(1-D-ribityl)lumazine + phosphate + 2 H2O + H(+)</text>
        <dbReference type="Rhea" id="RHEA:26152"/>
        <dbReference type="ChEBI" id="CHEBI:15377"/>
        <dbReference type="ChEBI" id="CHEBI:15378"/>
        <dbReference type="ChEBI" id="CHEBI:15934"/>
        <dbReference type="ChEBI" id="CHEBI:43474"/>
        <dbReference type="ChEBI" id="CHEBI:58201"/>
        <dbReference type="ChEBI" id="CHEBI:58830"/>
        <dbReference type="EC" id="2.5.1.78"/>
    </reaction>
</comment>
<comment type="pathway">
    <text evidence="1">Cofactor biosynthesis; riboflavin biosynthesis; riboflavin from 2-hydroxy-3-oxobutyl phosphate and 5-amino-6-(D-ribitylamino)uracil: step 1/2.</text>
</comment>
<comment type="subunit">
    <text evidence="1">Forms an icosahedral capsid composed of 60 subunits, arranged as a dodecamer of pentamers.</text>
</comment>
<comment type="similarity">
    <text evidence="1">Belongs to the DMRL synthase family.</text>
</comment>
<reference key="1">
    <citation type="journal article" date="2008" name="Genome Biol.">
        <title>Encapsulated in silica: genome, proteome and physiology of the thermophilic bacterium Anoxybacillus flavithermus WK1.</title>
        <authorList>
            <person name="Saw J.H."/>
            <person name="Mountain B.W."/>
            <person name="Feng L."/>
            <person name="Omelchenko M.V."/>
            <person name="Hou S."/>
            <person name="Saito J.A."/>
            <person name="Stott M.B."/>
            <person name="Li D."/>
            <person name="Zhao G."/>
            <person name="Wu J."/>
            <person name="Galperin M.Y."/>
            <person name="Koonin E.V."/>
            <person name="Makarova K.S."/>
            <person name="Wolf Y.I."/>
            <person name="Rigden D.J."/>
            <person name="Dunfield P.F."/>
            <person name="Wang L."/>
            <person name="Alam M."/>
        </authorList>
    </citation>
    <scope>NUCLEOTIDE SEQUENCE [LARGE SCALE GENOMIC DNA]</scope>
    <source>
        <strain>DSM 21510 / WK1</strain>
    </source>
</reference>
<organism>
    <name type="scientific">Anoxybacillus flavithermus (strain DSM 21510 / WK1)</name>
    <dbReference type="NCBI Taxonomy" id="491915"/>
    <lineage>
        <taxon>Bacteria</taxon>
        <taxon>Bacillati</taxon>
        <taxon>Bacillota</taxon>
        <taxon>Bacilli</taxon>
        <taxon>Bacillales</taxon>
        <taxon>Anoxybacillaceae</taxon>
        <taxon>Anoxybacillus</taxon>
    </lineage>
</organism>
<feature type="chain" id="PRO_1000195453" description="6,7-dimethyl-8-ribityllumazine synthase">
    <location>
        <begin position="1"/>
        <end position="154"/>
    </location>
</feature>
<feature type="active site" description="Proton donor" evidence="1">
    <location>
        <position position="88"/>
    </location>
</feature>
<feature type="binding site" evidence="1">
    <location>
        <position position="22"/>
    </location>
    <ligand>
        <name>5-amino-6-(D-ribitylamino)uracil</name>
        <dbReference type="ChEBI" id="CHEBI:15934"/>
    </ligand>
</feature>
<feature type="binding site" evidence="1">
    <location>
        <begin position="56"/>
        <end position="58"/>
    </location>
    <ligand>
        <name>5-amino-6-(D-ribitylamino)uracil</name>
        <dbReference type="ChEBI" id="CHEBI:15934"/>
    </ligand>
</feature>
<feature type="binding site" evidence="1">
    <location>
        <begin position="80"/>
        <end position="82"/>
    </location>
    <ligand>
        <name>5-amino-6-(D-ribitylamino)uracil</name>
        <dbReference type="ChEBI" id="CHEBI:15934"/>
    </ligand>
</feature>
<feature type="binding site" evidence="1">
    <location>
        <begin position="85"/>
        <end position="86"/>
    </location>
    <ligand>
        <name>(2S)-2-hydroxy-3-oxobutyl phosphate</name>
        <dbReference type="ChEBI" id="CHEBI:58830"/>
    </ligand>
</feature>
<feature type="binding site" evidence="1">
    <location>
        <position position="113"/>
    </location>
    <ligand>
        <name>5-amino-6-(D-ribitylamino)uracil</name>
        <dbReference type="ChEBI" id="CHEBI:15934"/>
    </ligand>
</feature>
<feature type="binding site" evidence="1">
    <location>
        <position position="127"/>
    </location>
    <ligand>
        <name>(2S)-2-hydroxy-3-oxobutyl phosphate</name>
        <dbReference type="ChEBI" id="CHEBI:58830"/>
    </ligand>
</feature>
<accession>B7GKI1</accession>
<dbReference type="EC" id="2.5.1.78" evidence="1"/>
<dbReference type="EMBL" id="CP000922">
    <property type="protein sequence ID" value="ACJ33394.1"/>
    <property type="molecule type" value="Genomic_DNA"/>
</dbReference>
<dbReference type="SMR" id="B7GKI1"/>
<dbReference type="STRING" id="491915.Aflv_1018"/>
<dbReference type="GeneID" id="7037275"/>
<dbReference type="KEGG" id="afl:Aflv_1018"/>
<dbReference type="eggNOG" id="COG0054">
    <property type="taxonomic scope" value="Bacteria"/>
</dbReference>
<dbReference type="HOGENOM" id="CLU_089358_1_1_9"/>
<dbReference type="UniPathway" id="UPA00275">
    <property type="reaction ID" value="UER00404"/>
</dbReference>
<dbReference type="Proteomes" id="UP000000742">
    <property type="component" value="Chromosome"/>
</dbReference>
<dbReference type="GO" id="GO:0005829">
    <property type="term" value="C:cytosol"/>
    <property type="evidence" value="ECO:0007669"/>
    <property type="project" value="TreeGrafter"/>
</dbReference>
<dbReference type="GO" id="GO:0009349">
    <property type="term" value="C:riboflavin synthase complex"/>
    <property type="evidence" value="ECO:0007669"/>
    <property type="project" value="InterPro"/>
</dbReference>
<dbReference type="GO" id="GO:0000906">
    <property type="term" value="F:6,7-dimethyl-8-ribityllumazine synthase activity"/>
    <property type="evidence" value="ECO:0007669"/>
    <property type="project" value="UniProtKB-UniRule"/>
</dbReference>
<dbReference type="GO" id="GO:0009231">
    <property type="term" value="P:riboflavin biosynthetic process"/>
    <property type="evidence" value="ECO:0007669"/>
    <property type="project" value="UniProtKB-UniRule"/>
</dbReference>
<dbReference type="CDD" id="cd09209">
    <property type="entry name" value="Lumazine_synthase-I"/>
    <property type="match status" value="1"/>
</dbReference>
<dbReference type="FunFam" id="3.40.50.960:FF:000001">
    <property type="entry name" value="6,7-dimethyl-8-ribityllumazine synthase"/>
    <property type="match status" value="1"/>
</dbReference>
<dbReference type="Gene3D" id="3.40.50.960">
    <property type="entry name" value="Lumazine/riboflavin synthase"/>
    <property type="match status" value="1"/>
</dbReference>
<dbReference type="HAMAP" id="MF_00178">
    <property type="entry name" value="Lumazine_synth"/>
    <property type="match status" value="1"/>
</dbReference>
<dbReference type="InterPro" id="IPR034964">
    <property type="entry name" value="LS"/>
</dbReference>
<dbReference type="InterPro" id="IPR002180">
    <property type="entry name" value="LS/RS"/>
</dbReference>
<dbReference type="InterPro" id="IPR036467">
    <property type="entry name" value="LS/RS_sf"/>
</dbReference>
<dbReference type="NCBIfam" id="TIGR00114">
    <property type="entry name" value="lumazine-synth"/>
    <property type="match status" value="1"/>
</dbReference>
<dbReference type="NCBIfam" id="NF000812">
    <property type="entry name" value="PRK00061.1-4"/>
    <property type="match status" value="1"/>
</dbReference>
<dbReference type="PANTHER" id="PTHR21058:SF0">
    <property type="entry name" value="6,7-DIMETHYL-8-RIBITYLLUMAZINE SYNTHASE"/>
    <property type="match status" value="1"/>
</dbReference>
<dbReference type="PANTHER" id="PTHR21058">
    <property type="entry name" value="6,7-DIMETHYL-8-RIBITYLLUMAZINE SYNTHASE DMRL SYNTHASE LUMAZINE SYNTHASE"/>
    <property type="match status" value="1"/>
</dbReference>
<dbReference type="Pfam" id="PF00885">
    <property type="entry name" value="DMRL_synthase"/>
    <property type="match status" value="1"/>
</dbReference>
<dbReference type="SUPFAM" id="SSF52121">
    <property type="entry name" value="Lumazine synthase"/>
    <property type="match status" value="1"/>
</dbReference>
<sequence length="154" mass="16380">MNVYEGNLVGTGLKIGIVVARFNEFITSKLLSGALDGLKRHGVEEQHIDVAWVPGAFEIPLVAKKMAESKKYDAVITLGAVIRGATSHYDYVCNEVAKGTSHAALSSGVPVIFGVLTTDTIEQAIERAGTKAGNKGWEAALSAIEMANVMRTFS</sequence>